<protein>
    <recommendedName>
        <fullName evidence="1">NAD(P)H-quinone oxidoreductase subunit 2 A, chloroplastic</fullName>
        <ecNumber evidence="1">7.1.1.-</ecNumber>
    </recommendedName>
    <alternativeName>
        <fullName evidence="1">NAD(P)H dehydrogenase, subunit 2 A</fullName>
    </alternativeName>
    <alternativeName>
        <fullName evidence="1">NADH-plastoquinone oxidoreductase subunit 2 A</fullName>
    </alternativeName>
</protein>
<geneLocation type="chloroplast"/>
<proteinExistence type="inferred from homology"/>
<comment type="function">
    <text evidence="1">NDH shuttles electrons from NAD(P)H:plastoquinone, via FMN and iron-sulfur (Fe-S) centers, to quinones in the photosynthetic chain and possibly in a chloroplast respiratory chain. The immediate electron acceptor for the enzyme in this species is believed to be plastoquinone. Couples the redox reaction to proton translocation, and thus conserves the redox energy in a proton gradient.</text>
</comment>
<comment type="catalytic activity">
    <reaction evidence="1">
        <text>a plastoquinone + NADH + (n+1) H(+)(in) = a plastoquinol + NAD(+) + n H(+)(out)</text>
        <dbReference type="Rhea" id="RHEA:42608"/>
        <dbReference type="Rhea" id="RHEA-COMP:9561"/>
        <dbReference type="Rhea" id="RHEA-COMP:9562"/>
        <dbReference type="ChEBI" id="CHEBI:15378"/>
        <dbReference type="ChEBI" id="CHEBI:17757"/>
        <dbReference type="ChEBI" id="CHEBI:57540"/>
        <dbReference type="ChEBI" id="CHEBI:57945"/>
        <dbReference type="ChEBI" id="CHEBI:62192"/>
    </reaction>
</comment>
<comment type="catalytic activity">
    <reaction evidence="1">
        <text>a plastoquinone + NADPH + (n+1) H(+)(in) = a plastoquinol + NADP(+) + n H(+)(out)</text>
        <dbReference type="Rhea" id="RHEA:42612"/>
        <dbReference type="Rhea" id="RHEA-COMP:9561"/>
        <dbReference type="Rhea" id="RHEA-COMP:9562"/>
        <dbReference type="ChEBI" id="CHEBI:15378"/>
        <dbReference type="ChEBI" id="CHEBI:17757"/>
        <dbReference type="ChEBI" id="CHEBI:57783"/>
        <dbReference type="ChEBI" id="CHEBI:58349"/>
        <dbReference type="ChEBI" id="CHEBI:62192"/>
    </reaction>
</comment>
<comment type="subunit">
    <text evidence="1">NDH is composed of at least 16 different subunits, 5 of which are encoded in the nucleus.</text>
</comment>
<comment type="subcellular location">
    <subcellularLocation>
        <location evidence="1">Plastid</location>
        <location evidence="1">Chloroplast thylakoid membrane</location>
        <topology evidence="1">Multi-pass membrane protein</topology>
    </subcellularLocation>
</comment>
<comment type="similarity">
    <text evidence="1">Belongs to the complex I subunit 2 family.</text>
</comment>
<accession>P0CC94</accession>
<accession>Q09FQ0</accession>
<sequence>MIWHVQNENFILDSTRIFMKAFHLLLFHGSFIFPECILIFGLILLLMIDSTSDQKDIPWLYFISSTSLVMSIAALLFRWREEPMISFSGNFQTNNFNEIFQFLILLCSTLCIPLSVEYIECTEMAITEFLLFVLTATLGGMFLCGANDLITIFVAPECFSLCSYLLSGYTKRDVRSNEATTKYLLMGGASSSILVHGFSWLYGSSGGEIELQEIVNGLINTQMYNSPGISIALIFITVGIGFKLSPAPSHQWTPDVYEGSPTPVVAFLSVTSKVAASALATRIFDIPFYFSSNEWHLLLEILAILSMILGNLIAITQTSMKRMLAYSSIGQIGYVIIGIIVGDSNDGYASMITYMLFYISMNLGTFACIVLFGLRTGTDNIRDYAGLYTKDPFLALSLALCLLSLGGLPPLAGFFGKLHLFWCGWQAGLYFLVSIGLLTSVVSIYYYLKIIKLLMTGRNQEITPHVRNYRRSPLRSNNSIELSMIVCVIASTIPGISMNPIIAIAQDTLFF</sequence>
<name>NU2C1_NANDO</name>
<organism>
    <name type="scientific">Nandina domestica</name>
    <name type="common">Heavenly bamboo</name>
    <dbReference type="NCBI Taxonomy" id="41776"/>
    <lineage>
        <taxon>Eukaryota</taxon>
        <taxon>Viridiplantae</taxon>
        <taxon>Streptophyta</taxon>
        <taxon>Embryophyta</taxon>
        <taxon>Tracheophyta</taxon>
        <taxon>Spermatophyta</taxon>
        <taxon>Magnoliopsida</taxon>
        <taxon>Ranunculales</taxon>
        <taxon>Berberidaceae</taxon>
        <taxon>Nandinoideae</taxon>
        <taxon>Nandineae</taxon>
        <taxon>Nandina</taxon>
    </lineage>
</organism>
<gene>
    <name evidence="1" type="primary">ndhB1</name>
</gene>
<reference key="1">
    <citation type="journal article" date="2006" name="BMC Plant Biol.">
        <title>Rapid and accurate pyrosequencing of angiosperm plastid genomes.</title>
        <authorList>
            <person name="Moore M.J."/>
            <person name="Dhingra A."/>
            <person name="Soltis P.S."/>
            <person name="Shaw R."/>
            <person name="Farmerie W.G."/>
            <person name="Folta K.M."/>
            <person name="Soltis D.E."/>
        </authorList>
    </citation>
    <scope>NUCLEOTIDE SEQUENCE [LARGE SCALE GENOMIC DNA]</scope>
</reference>
<dbReference type="EC" id="7.1.1.-" evidence="1"/>
<dbReference type="EMBL" id="DQ923117">
    <property type="protein sequence ID" value="ABI49910.1"/>
    <property type="molecule type" value="Genomic_DNA"/>
</dbReference>
<dbReference type="SMR" id="P0CC94"/>
<dbReference type="GO" id="GO:0009535">
    <property type="term" value="C:chloroplast thylakoid membrane"/>
    <property type="evidence" value="ECO:0007669"/>
    <property type="project" value="UniProtKB-SubCell"/>
</dbReference>
<dbReference type="GO" id="GO:0008137">
    <property type="term" value="F:NADH dehydrogenase (ubiquinone) activity"/>
    <property type="evidence" value="ECO:0007669"/>
    <property type="project" value="InterPro"/>
</dbReference>
<dbReference type="GO" id="GO:0048038">
    <property type="term" value="F:quinone binding"/>
    <property type="evidence" value="ECO:0007669"/>
    <property type="project" value="UniProtKB-KW"/>
</dbReference>
<dbReference type="GO" id="GO:0042773">
    <property type="term" value="P:ATP synthesis coupled electron transport"/>
    <property type="evidence" value="ECO:0007669"/>
    <property type="project" value="InterPro"/>
</dbReference>
<dbReference type="GO" id="GO:0019684">
    <property type="term" value="P:photosynthesis, light reaction"/>
    <property type="evidence" value="ECO:0007669"/>
    <property type="project" value="UniProtKB-UniRule"/>
</dbReference>
<dbReference type="HAMAP" id="MF_00445">
    <property type="entry name" value="NDH1_NuoN_1"/>
    <property type="match status" value="1"/>
</dbReference>
<dbReference type="InterPro" id="IPR010096">
    <property type="entry name" value="NADH-Q_OxRdtase_suN/2"/>
</dbReference>
<dbReference type="InterPro" id="IPR001750">
    <property type="entry name" value="ND/Mrp_TM"/>
</dbReference>
<dbReference type="InterPro" id="IPR045693">
    <property type="entry name" value="Ndh2_N"/>
</dbReference>
<dbReference type="NCBIfam" id="TIGR01770">
    <property type="entry name" value="NDH_I_N"/>
    <property type="match status" value="1"/>
</dbReference>
<dbReference type="NCBIfam" id="NF002701">
    <property type="entry name" value="PRK02504.1"/>
    <property type="match status" value="1"/>
</dbReference>
<dbReference type="PANTHER" id="PTHR22773">
    <property type="entry name" value="NADH DEHYDROGENASE"/>
    <property type="match status" value="1"/>
</dbReference>
<dbReference type="Pfam" id="PF19530">
    <property type="entry name" value="Ndh2_N"/>
    <property type="match status" value="1"/>
</dbReference>
<dbReference type="Pfam" id="PF00361">
    <property type="entry name" value="Proton_antipo_M"/>
    <property type="match status" value="1"/>
</dbReference>
<dbReference type="PRINTS" id="PR01434">
    <property type="entry name" value="NADHDHGNASE5"/>
</dbReference>
<keyword id="KW-0150">Chloroplast</keyword>
<keyword id="KW-0472">Membrane</keyword>
<keyword id="KW-0520">NAD</keyword>
<keyword id="KW-0521">NADP</keyword>
<keyword id="KW-0934">Plastid</keyword>
<keyword id="KW-0618">Plastoquinone</keyword>
<keyword id="KW-0874">Quinone</keyword>
<keyword id="KW-0793">Thylakoid</keyword>
<keyword id="KW-1278">Translocase</keyword>
<keyword id="KW-0812">Transmembrane</keyword>
<keyword id="KW-1133">Transmembrane helix</keyword>
<keyword id="KW-0813">Transport</keyword>
<evidence type="ECO:0000255" key="1">
    <source>
        <dbReference type="HAMAP-Rule" id="MF_00445"/>
    </source>
</evidence>
<feature type="chain" id="PRO_0000344273" description="NAD(P)H-quinone oxidoreductase subunit 2 A, chloroplastic">
    <location>
        <begin position="1"/>
        <end position="511"/>
    </location>
</feature>
<feature type="transmembrane region" description="Helical" evidence="1">
    <location>
        <begin position="24"/>
        <end position="44"/>
    </location>
</feature>
<feature type="transmembrane region" description="Helical" evidence="1">
    <location>
        <begin position="57"/>
        <end position="77"/>
    </location>
</feature>
<feature type="transmembrane region" description="Helical" evidence="1">
    <location>
        <begin position="99"/>
        <end position="119"/>
    </location>
</feature>
<feature type="transmembrane region" description="Helical" evidence="1">
    <location>
        <begin position="124"/>
        <end position="144"/>
    </location>
</feature>
<feature type="transmembrane region" description="Helical" evidence="1">
    <location>
        <begin position="149"/>
        <end position="169"/>
    </location>
</feature>
<feature type="transmembrane region" description="Helical" evidence="1">
    <location>
        <begin position="183"/>
        <end position="203"/>
    </location>
</feature>
<feature type="transmembrane region" description="Helical" evidence="1">
    <location>
        <begin position="227"/>
        <end position="247"/>
    </location>
</feature>
<feature type="transmembrane region" description="Helical" evidence="1">
    <location>
        <begin position="295"/>
        <end position="315"/>
    </location>
</feature>
<feature type="transmembrane region" description="Helical" evidence="1">
    <location>
        <begin position="323"/>
        <end position="343"/>
    </location>
</feature>
<feature type="transmembrane region" description="Helical" evidence="1">
    <location>
        <begin position="354"/>
        <end position="374"/>
    </location>
</feature>
<feature type="transmembrane region" description="Helical" evidence="1">
    <location>
        <begin position="395"/>
        <end position="415"/>
    </location>
</feature>
<feature type="transmembrane region" description="Helical" evidence="1">
    <location>
        <begin position="418"/>
        <end position="438"/>
    </location>
</feature>
<feature type="transmembrane region" description="Helical" evidence="1">
    <location>
        <begin position="484"/>
        <end position="504"/>
    </location>
</feature>